<geneLocation type="chloroplast"/>
<protein>
    <recommendedName>
        <fullName>Probable RuBisCO transcriptional regulator</fullName>
    </recommendedName>
</protein>
<gene>
    <name type="primary">rbcR</name>
    <name type="synonym">ycf30</name>
</gene>
<dbReference type="EMBL" id="EF067920">
    <property type="protein sequence ID" value="ABK20660.1"/>
    <property type="molecule type" value="Genomic_DNA"/>
</dbReference>
<dbReference type="RefSeq" id="YP_874437.1">
    <property type="nucleotide sequence ID" value="NC_008588.1"/>
</dbReference>
<dbReference type="SMR" id="A0T0G2"/>
<dbReference type="STRING" id="556484.A0T0G2"/>
<dbReference type="GeneID" id="4524560"/>
<dbReference type="InParanoid" id="A0T0G2"/>
<dbReference type="Proteomes" id="UP000000759">
    <property type="component" value="Chloroplast"/>
</dbReference>
<dbReference type="GO" id="GO:0009507">
    <property type="term" value="C:chloroplast"/>
    <property type="evidence" value="ECO:0007669"/>
    <property type="project" value="UniProtKB-SubCell"/>
</dbReference>
<dbReference type="GO" id="GO:0003700">
    <property type="term" value="F:DNA-binding transcription factor activity"/>
    <property type="evidence" value="ECO:0007669"/>
    <property type="project" value="InterPro"/>
</dbReference>
<dbReference type="GO" id="GO:0000976">
    <property type="term" value="F:transcription cis-regulatory region binding"/>
    <property type="evidence" value="ECO:0007669"/>
    <property type="project" value="TreeGrafter"/>
</dbReference>
<dbReference type="CDD" id="cd08420">
    <property type="entry name" value="PBP2_CysL_like"/>
    <property type="match status" value="1"/>
</dbReference>
<dbReference type="FunFam" id="1.10.10.10:FF:000001">
    <property type="entry name" value="LysR family transcriptional regulator"/>
    <property type="match status" value="1"/>
</dbReference>
<dbReference type="Gene3D" id="3.40.190.290">
    <property type="match status" value="1"/>
</dbReference>
<dbReference type="Gene3D" id="1.10.10.10">
    <property type="entry name" value="Winged helix-like DNA-binding domain superfamily/Winged helix DNA-binding domain"/>
    <property type="match status" value="1"/>
</dbReference>
<dbReference type="InterPro" id="IPR005119">
    <property type="entry name" value="LysR_subst-bd"/>
</dbReference>
<dbReference type="InterPro" id="IPR000847">
    <property type="entry name" value="Tscrpt_reg_HTH_LysR"/>
</dbReference>
<dbReference type="InterPro" id="IPR036388">
    <property type="entry name" value="WH-like_DNA-bd_sf"/>
</dbReference>
<dbReference type="InterPro" id="IPR036390">
    <property type="entry name" value="WH_DNA-bd_sf"/>
</dbReference>
<dbReference type="PANTHER" id="PTHR30126">
    <property type="entry name" value="HTH-TYPE TRANSCRIPTIONAL REGULATOR"/>
    <property type="match status" value="1"/>
</dbReference>
<dbReference type="PANTHER" id="PTHR30126:SF39">
    <property type="entry name" value="HTH-TYPE TRANSCRIPTIONAL REGULATOR CYSL"/>
    <property type="match status" value="1"/>
</dbReference>
<dbReference type="Pfam" id="PF00126">
    <property type="entry name" value="HTH_1"/>
    <property type="match status" value="1"/>
</dbReference>
<dbReference type="Pfam" id="PF03466">
    <property type="entry name" value="LysR_substrate"/>
    <property type="match status" value="1"/>
</dbReference>
<dbReference type="PRINTS" id="PR00039">
    <property type="entry name" value="HTHLYSR"/>
</dbReference>
<dbReference type="SUPFAM" id="SSF53850">
    <property type="entry name" value="Periplasmic binding protein-like II"/>
    <property type="match status" value="1"/>
</dbReference>
<dbReference type="SUPFAM" id="SSF46785">
    <property type="entry name" value="Winged helix' DNA-binding domain"/>
    <property type="match status" value="1"/>
</dbReference>
<dbReference type="PROSITE" id="PS50931">
    <property type="entry name" value="HTH_LYSR"/>
    <property type="match status" value="1"/>
</dbReference>
<name>RBCR_PHATC</name>
<accession>A0T0G2</accession>
<keyword id="KW-0150">Chloroplast</keyword>
<keyword id="KW-0238">DNA-binding</keyword>
<keyword id="KW-0934">Plastid</keyword>
<keyword id="KW-1185">Reference proteome</keyword>
<keyword id="KW-0804">Transcription</keyword>
<keyword id="KW-0805">Transcription regulation</keyword>
<evidence type="ECO:0000250" key="1"/>
<evidence type="ECO:0000255" key="2">
    <source>
        <dbReference type="PROSITE-ProRule" id="PRU00253"/>
    </source>
</evidence>
<evidence type="ECO:0000305" key="3"/>
<comment type="function">
    <text evidence="1">Trans-acting transcriptional regulator of RuBisCO genes (rbcL and rbcS) expression.</text>
</comment>
<comment type="subcellular location">
    <subcellularLocation>
        <location>Plastid</location>
        <location>Chloroplast</location>
    </subcellularLocation>
</comment>
<comment type="similarity">
    <text evidence="3">Belongs to the LysR transcriptional regulatory family.</text>
</comment>
<feature type="chain" id="PRO_0000280078" description="Probable RuBisCO transcriptional regulator">
    <location>
        <begin position="1"/>
        <end position="307"/>
    </location>
</feature>
<feature type="domain" description="HTH lysR-type" evidence="2">
    <location>
        <begin position="4"/>
        <end position="61"/>
    </location>
</feature>
<feature type="DNA-binding region" description="H-T-H motif" evidence="2">
    <location>
        <begin position="21"/>
        <end position="40"/>
    </location>
</feature>
<organism>
    <name type="scientific">Phaeodactylum tricornutum (strain CCAP 1055/1)</name>
    <dbReference type="NCBI Taxonomy" id="556484"/>
    <lineage>
        <taxon>Eukaryota</taxon>
        <taxon>Sar</taxon>
        <taxon>Stramenopiles</taxon>
        <taxon>Ochrophyta</taxon>
        <taxon>Bacillariophyta</taxon>
        <taxon>Bacillariophyceae</taxon>
        <taxon>Bacillariophycidae</taxon>
        <taxon>Naviculales</taxon>
        <taxon>Phaeodactylaceae</taxon>
        <taxon>Phaeodactylum</taxon>
    </lineage>
</organism>
<reference key="1">
    <citation type="journal article" date="2007" name="Mol. Genet. Genomics">
        <title>Chloroplast genomes of the diatoms Phaeodactylum tricornutum and Thalassiosira pseudonana: comparison with other plastid genomes of the red lineage.</title>
        <authorList>
            <person name="Oudot-Le Secq M.-P."/>
            <person name="Grimwood J."/>
            <person name="Shapiro H."/>
            <person name="Armbrust E.V."/>
            <person name="Bowler C."/>
            <person name="Green B.R."/>
        </authorList>
    </citation>
    <scope>NUCLEOTIDE SEQUENCE [LARGE SCALE GENOMIC DNA]</scope>
    <source>
        <strain>CCAP 1055/1</strain>
    </source>
</reference>
<sequence>MLPFTLQQLRILKAVATEKNFTKAAELLYLSQPSLSKQIKTLEKNLDILLVNRENNKISLTENGKIFLQYSERILALCEESCRALIDLKNGERGSLTVGASQTIGTYLMPRVLALFAQNYPQIDLKVQVNSTRIVAKNILNREIDIAVVGGEIPLDLKKNLTVEKFVEDEFSLIIPKSHPFANKKIVTKEDLYHLNFISLNSNSTIRKFIDNILIQNQIDTKQLKIIMQLNSIEAIKTAVSLGQGAAFVSSAAIEKEIELKTIEILKIENIRITRTLSIISNSESYKSKAFEFFSNELKKLKNEIEN</sequence>
<proteinExistence type="inferred from homology"/>